<gene>
    <name evidence="1" type="primary">rpl24e</name>
    <name type="ordered locus">MmarC7_1663</name>
</gene>
<proteinExistence type="inferred from homology"/>
<keyword id="KW-0479">Metal-binding</keyword>
<keyword id="KW-0687">Ribonucleoprotein</keyword>
<keyword id="KW-0689">Ribosomal protein</keyword>
<keyword id="KW-0694">RNA-binding</keyword>
<keyword id="KW-0699">rRNA-binding</keyword>
<keyword id="KW-0862">Zinc</keyword>
<keyword id="KW-0863">Zinc-finger</keyword>
<protein>
    <recommendedName>
        <fullName evidence="1">Large ribosomal subunit protein eL24</fullName>
    </recommendedName>
    <alternativeName>
        <fullName evidence="2">50S ribosomal protein L24e</fullName>
    </alternativeName>
</protein>
<feature type="chain" id="PRO_1000017355" description="Large ribosomal subunit protein eL24">
    <location>
        <begin position="1"/>
        <end position="62"/>
    </location>
</feature>
<feature type="zinc finger region" description="C4-type" evidence="1">
    <location>
        <begin position="6"/>
        <end position="36"/>
    </location>
</feature>
<feature type="binding site" evidence="1">
    <location>
        <position position="6"/>
    </location>
    <ligand>
        <name>Zn(2+)</name>
        <dbReference type="ChEBI" id="CHEBI:29105"/>
    </ligand>
</feature>
<feature type="binding site" evidence="1">
    <location>
        <position position="9"/>
    </location>
    <ligand>
        <name>Zn(2+)</name>
        <dbReference type="ChEBI" id="CHEBI:29105"/>
    </ligand>
</feature>
<feature type="binding site" evidence="1">
    <location>
        <position position="32"/>
    </location>
    <ligand>
        <name>Zn(2+)</name>
        <dbReference type="ChEBI" id="CHEBI:29105"/>
    </ligand>
</feature>
<feature type="binding site" evidence="1">
    <location>
        <position position="36"/>
    </location>
    <ligand>
        <name>Zn(2+)</name>
        <dbReference type="ChEBI" id="CHEBI:29105"/>
    </ligand>
</feature>
<dbReference type="EMBL" id="CP000745">
    <property type="protein sequence ID" value="ABR66721.1"/>
    <property type="molecule type" value="Genomic_DNA"/>
</dbReference>
<dbReference type="SMR" id="A6VJU5"/>
<dbReference type="STRING" id="426368.MmarC7_1663"/>
<dbReference type="KEGG" id="mmz:MmarC7_1663"/>
<dbReference type="eggNOG" id="arCOG01950">
    <property type="taxonomic scope" value="Archaea"/>
</dbReference>
<dbReference type="HOGENOM" id="CLU_190191_0_0_2"/>
<dbReference type="OrthoDB" id="55506at2157"/>
<dbReference type="GO" id="GO:1990904">
    <property type="term" value="C:ribonucleoprotein complex"/>
    <property type="evidence" value="ECO:0007669"/>
    <property type="project" value="UniProtKB-KW"/>
</dbReference>
<dbReference type="GO" id="GO:0005840">
    <property type="term" value="C:ribosome"/>
    <property type="evidence" value="ECO:0007669"/>
    <property type="project" value="UniProtKB-KW"/>
</dbReference>
<dbReference type="GO" id="GO:0019843">
    <property type="term" value="F:rRNA binding"/>
    <property type="evidence" value="ECO:0007669"/>
    <property type="project" value="UniProtKB-UniRule"/>
</dbReference>
<dbReference type="GO" id="GO:0003735">
    <property type="term" value="F:structural constituent of ribosome"/>
    <property type="evidence" value="ECO:0007669"/>
    <property type="project" value="InterPro"/>
</dbReference>
<dbReference type="GO" id="GO:0008270">
    <property type="term" value="F:zinc ion binding"/>
    <property type="evidence" value="ECO:0007669"/>
    <property type="project" value="UniProtKB-UniRule"/>
</dbReference>
<dbReference type="GO" id="GO:0006412">
    <property type="term" value="P:translation"/>
    <property type="evidence" value="ECO:0007669"/>
    <property type="project" value="UniProtKB-UniRule"/>
</dbReference>
<dbReference type="CDD" id="cd00472">
    <property type="entry name" value="Ribosomal_L24e_L24"/>
    <property type="match status" value="1"/>
</dbReference>
<dbReference type="Gene3D" id="2.30.170.20">
    <property type="entry name" value="Ribosomal protein L24e"/>
    <property type="match status" value="1"/>
</dbReference>
<dbReference type="HAMAP" id="MF_00773">
    <property type="entry name" value="Ribosomal_eL24"/>
    <property type="match status" value="1"/>
</dbReference>
<dbReference type="InterPro" id="IPR038630">
    <property type="entry name" value="L24e/L24_sf"/>
</dbReference>
<dbReference type="InterPro" id="IPR056366">
    <property type="entry name" value="Ribosomal_eL24"/>
</dbReference>
<dbReference type="InterPro" id="IPR055345">
    <property type="entry name" value="Ribosomal_eL24-rel_arc"/>
</dbReference>
<dbReference type="InterPro" id="IPR000988">
    <property type="entry name" value="Ribosomal_eL24-rel_N"/>
</dbReference>
<dbReference type="InterPro" id="IPR023442">
    <property type="entry name" value="Ribosomal_eL24_CS"/>
</dbReference>
<dbReference type="InterPro" id="IPR011017">
    <property type="entry name" value="TRASH_dom"/>
</dbReference>
<dbReference type="NCBIfam" id="NF034186">
    <property type="entry name" value="PRK14891.1-1"/>
    <property type="match status" value="1"/>
</dbReference>
<dbReference type="PANTHER" id="PTHR10792">
    <property type="entry name" value="60S RIBOSOMAL PROTEIN L24"/>
    <property type="match status" value="1"/>
</dbReference>
<dbReference type="PANTHER" id="PTHR10792:SF1">
    <property type="entry name" value="RIBOSOMAL PROTEIN L24"/>
    <property type="match status" value="1"/>
</dbReference>
<dbReference type="Pfam" id="PF01246">
    <property type="entry name" value="Ribosomal_L24e"/>
    <property type="match status" value="1"/>
</dbReference>
<dbReference type="SMART" id="SM00746">
    <property type="entry name" value="TRASH"/>
    <property type="match status" value="1"/>
</dbReference>
<dbReference type="SUPFAM" id="SSF57716">
    <property type="entry name" value="Glucocorticoid receptor-like (DNA-binding domain)"/>
    <property type="match status" value="1"/>
</dbReference>
<dbReference type="PROSITE" id="PS01073">
    <property type="entry name" value="RIBOSOMAL_L24E"/>
    <property type="match status" value="1"/>
</dbReference>
<reference key="1">
    <citation type="submission" date="2007-06" db="EMBL/GenBank/DDBJ databases">
        <title>Complete sequence of Methanococcus maripaludis C7.</title>
        <authorList>
            <consortium name="US DOE Joint Genome Institute"/>
            <person name="Copeland A."/>
            <person name="Lucas S."/>
            <person name="Lapidus A."/>
            <person name="Barry K."/>
            <person name="Glavina del Rio T."/>
            <person name="Dalin E."/>
            <person name="Tice H."/>
            <person name="Pitluck S."/>
            <person name="Clum A."/>
            <person name="Schmutz J."/>
            <person name="Larimer F."/>
            <person name="Land M."/>
            <person name="Hauser L."/>
            <person name="Kyrpides N."/>
            <person name="Anderson I."/>
            <person name="Sieprawska-Lupa M."/>
            <person name="Whitman W.B."/>
            <person name="Richardson P."/>
        </authorList>
    </citation>
    <scope>NUCLEOTIDE SEQUENCE [LARGE SCALE GENOMIC DNA]</scope>
    <source>
        <strain>C7 / ATCC BAA-1331</strain>
    </source>
</reference>
<evidence type="ECO:0000255" key="1">
    <source>
        <dbReference type="HAMAP-Rule" id="MF_00773"/>
    </source>
</evidence>
<evidence type="ECO:0000305" key="2"/>
<organism>
    <name type="scientific">Methanococcus maripaludis (strain C7 / ATCC BAA-1331)</name>
    <dbReference type="NCBI Taxonomy" id="426368"/>
    <lineage>
        <taxon>Archaea</taxon>
        <taxon>Methanobacteriati</taxon>
        <taxon>Methanobacteriota</taxon>
        <taxon>Methanomada group</taxon>
        <taxon>Methanococci</taxon>
        <taxon>Methanococcales</taxon>
        <taxon>Methanococcaceae</taxon>
        <taxon>Methanococcus</taxon>
    </lineage>
</organism>
<comment type="function">
    <text evidence="1">Binds to the 23S rRNA.</text>
</comment>
<comment type="cofactor">
    <cofactor evidence="1">
        <name>Zn(2+)</name>
        <dbReference type="ChEBI" id="CHEBI:29105"/>
    </cofactor>
    <text evidence="1">Binds 1 zinc ion per subunit.</text>
</comment>
<comment type="subunit">
    <text evidence="1">Part of the 50S ribosomal subunit. Forms a cluster with proteins L3 and L14.</text>
</comment>
<comment type="similarity">
    <text evidence="1">Belongs to the eukaryotic ribosomal protein eL24 family.</text>
</comment>
<sequence length="62" mass="7179">MEWKTCSFCEGTIEPGCGKKYVKKDGSVMHFCSSKCEKNFKLGRVGRKVKWTNTFKRINRGQ</sequence>
<accession>A6VJU5</accession>
<name>RL24E_METM7</name>